<accession>P29218</accession>
<accession>B2R733</accession>
<accession>B4DLN3</accession>
<accession>B7Z6Q4</accession>
<accession>J3KQT7</accession>
<accession>Q9UK71</accession>
<feature type="chain" id="PRO_0000142513" description="Inositol monophosphatase 1">
    <location>
        <begin position="1"/>
        <end position="277"/>
    </location>
</feature>
<feature type="binding site" evidence="4 7 10 13">
    <location>
        <position position="70"/>
    </location>
    <ligand>
        <name>Mg(2+)</name>
        <dbReference type="ChEBI" id="CHEBI:18420"/>
        <label>1</label>
        <note>catalytic</note>
    </ligand>
</feature>
<feature type="binding site" evidence="6 14">
    <location>
        <position position="70"/>
    </location>
    <ligand>
        <name>substrate</name>
    </ligand>
</feature>
<feature type="binding site" evidence="4 7 10 13">
    <location>
        <position position="90"/>
    </location>
    <ligand>
        <name>Mg(2+)</name>
        <dbReference type="ChEBI" id="CHEBI:18420"/>
        <label>1</label>
        <note>catalytic</note>
    </ligand>
</feature>
<feature type="binding site" evidence="4 7">
    <location>
        <position position="90"/>
    </location>
    <ligand>
        <name>Mg(2+)</name>
        <dbReference type="ChEBI" id="CHEBI:18420"/>
        <label>2</label>
    </ligand>
</feature>
<feature type="binding site" evidence="6 14">
    <location>
        <begin position="92"/>
        <end position="95"/>
    </location>
    <ligand>
        <name>substrate</name>
    </ligand>
</feature>
<feature type="binding site" evidence="4 7 10 13">
    <location>
        <position position="92"/>
    </location>
    <ligand>
        <name>Mg(2+)</name>
        <dbReference type="ChEBI" id="CHEBI:18420"/>
        <label>1</label>
        <note>catalytic</note>
    </ligand>
</feature>
<feature type="binding site" evidence="4 7">
    <location>
        <position position="93"/>
    </location>
    <ligand>
        <name>Mg(2+)</name>
        <dbReference type="ChEBI" id="CHEBI:18420"/>
        <label>2</label>
    </ligand>
</feature>
<feature type="binding site" evidence="6">
    <location>
        <begin position="194"/>
        <end position="196"/>
    </location>
    <ligand>
        <name>substrate</name>
    </ligand>
</feature>
<feature type="binding site" evidence="6 14">
    <location>
        <position position="213"/>
    </location>
    <ligand>
        <name>substrate</name>
    </ligand>
</feature>
<feature type="binding site" evidence="4 7">
    <location>
        <position position="220"/>
    </location>
    <ligand>
        <name>Mg(2+)</name>
        <dbReference type="ChEBI" id="CHEBI:18420"/>
        <label>2</label>
    </ligand>
</feature>
<feature type="binding site" evidence="6">
    <location>
        <position position="220"/>
    </location>
    <ligand>
        <name>substrate</name>
    </ligand>
</feature>
<feature type="modified residue" description="Phosphothreonine" evidence="24">
    <location>
        <position position="168"/>
    </location>
</feature>
<feature type="splice variant" id="VSP_046308" description="In isoform 3." evidence="11">
    <original>M</original>
    <variation>MGQRPGPVLPAVAVLGQVAKRKVAWLLRWKAVTRTETAGNSSGVYGFGKMKIFVKYFQKM</variation>
    <location>
        <position position="1"/>
    </location>
</feature>
<feature type="splice variant" id="VSP_042521" description="In isoform 2." evidence="11">
    <original>DITKSLLVTELGSSRTPETVRMVLSNMEKLFCIPVHGIRSVGTAAVNMCLVATGGADAYYEMGIHCWDVAGAGIIVTEAGGVLMDVTGGPFDLMSRRVIAANNRILAERIAKEIQVIPLQRDDED</original>
    <variation>GSGVLEQQLLICALWQLAEQMHIMKWEFTAGMLQELALLLLKLVAC</variation>
    <location>
        <begin position="153"/>
        <end position="277"/>
    </location>
</feature>
<feature type="sequence variant" id="VAR_049600" description="In dbSNP:rs204781.">
    <original>I</original>
    <variation>V</variation>
    <location>
        <position position="109"/>
    </location>
</feature>
<feature type="mutagenesis site" description="50-fold reduction in activity." evidence="8">
    <original>K</original>
    <variation>Q</variation>
    <location>
        <position position="36"/>
    </location>
</feature>
<feature type="mutagenesis site" description="Loss of activity." evidence="3">
    <original>D</original>
    <variation>N</variation>
    <location>
        <position position="93"/>
    </location>
</feature>
<feature type="mutagenesis site" description="Reduced enzyme activity with myo-inositol 1-phosphate." evidence="6">
    <original>S</original>
    <variation>A</variation>
    <variation>I</variation>
    <location>
        <position position="165"/>
    </location>
</feature>
<feature type="mutagenesis site" description="Strongly reduced affinity for myo-inositol 1-phosphate and strongly reduced enzyme activity with myo-inositol 1-phosphate." evidence="6">
    <original>E</original>
    <variation>Q</variation>
    <location>
        <position position="213"/>
    </location>
</feature>
<feature type="helix" evidence="25">
    <location>
        <begin position="6"/>
        <end position="27"/>
    </location>
</feature>
<feature type="strand" evidence="25">
    <location>
        <begin position="34"/>
        <end position="38"/>
    </location>
</feature>
<feature type="strand" evidence="25">
    <location>
        <begin position="41"/>
        <end position="43"/>
    </location>
</feature>
<feature type="helix" evidence="25">
    <location>
        <begin position="45"/>
        <end position="61"/>
    </location>
</feature>
<feature type="strand" evidence="25">
    <location>
        <begin position="66"/>
        <end position="69"/>
    </location>
</feature>
<feature type="helix" evidence="25">
    <location>
        <begin position="70"/>
        <end position="74"/>
    </location>
</feature>
<feature type="strand" evidence="25">
    <location>
        <begin position="86"/>
        <end position="93"/>
    </location>
</feature>
<feature type="helix" evidence="25">
    <location>
        <begin position="95"/>
        <end position="100"/>
    </location>
</feature>
<feature type="strand" evidence="25">
    <location>
        <begin position="106"/>
        <end position="113"/>
    </location>
</feature>
<feature type="strand" evidence="25">
    <location>
        <begin position="116"/>
        <end position="124"/>
    </location>
</feature>
<feature type="turn" evidence="25">
    <location>
        <begin position="125"/>
        <end position="128"/>
    </location>
</feature>
<feature type="strand" evidence="25">
    <location>
        <begin position="129"/>
        <end position="134"/>
    </location>
</feature>
<feature type="turn" evidence="25">
    <location>
        <begin position="135"/>
        <end position="137"/>
    </location>
</feature>
<feature type="strand" evidence="25">
    <location>
        <begin position="138"/>
        <end position="141"/>
    </location>
</feature>
<feature type="helix" evidence="25">
    <location>
        <begin position="154"/>
        <end position="156"/>
    </location>
</feature>
<feature type="strand" evidence="25">
    <location>
        <begin position="158"/>
        <end position="160"/>
    </location>
</feature>
<feature type="helix" evidence="25">
    <location>
        <begin position="169"/>
        <end position="183"/>
    </location>
</feature>
<feature type="turn" evidence="25">
    <location>
        <begin position="184"/>
        <end position="186"/>
    </location>
</feature>
<feature type="strand" evidence="25">
    <location>
        <begin position="188"/>
        <end position="192"/>
    </location>
</feature>
<feature type="helix" evidence="25">
    <location>
        <begin position="196"/>
        <end position="204"/>
    </location>
</feature>
<feature type="strand" evidence="25">
    <location>
        <begin position="207"/>
        <end position="215"/>
    </location>
</feature>
<feature type="helix" evidence="25">
    <location>
        <begin position="218"/>
        <end position="221"/>
    </location>
</feature>
<feature type="helix" evidence="25">
    <location>
        <begin position="224"/>
        <end position="230"/>
    </location>
</feature>
<feature type="strand" evidence="25">
    <location>
        <begin position="234"/>
        <end position="236"/>
    </location>
</feature>
<feature type="strand" evidence="25">
    <location>
        <begin position="240"/>
        <end position="242"/>
    </location>
</feature>
<feature type="strand" evidence="25">
    <location>
        <begin position="247"/>
        <end position="255"/>
    </location>
</feature>
<feature type="helix" evidence="25">
    <location>
        <begin position="256"/>
        <end position="263"/>
    </location>
</feature>
<feature type="sequence conflict" description="In Ref. 4; BAH13340." evidence="17" ref="4">
    <original>Q</original>
    <variation>R</variation>
    <location sequence="P29218-3">
        <position position="17"/>
    </location>
</feature>
<name>IMPA1_HUMAN</name>
<evidence type="ECO:0000269" key="1">
    <source>
    </source>
</evidence>
<evidence type="ECO:0000269" key="2">
    <source>
    </source>
</evidence>
<evidence type="ECO:0000269" key="3">
    <source>
    </source>
</evidence>
<evidence type="ECO:0000269" key="4">
    <source>
    </source>
</evidence>
<evidence type="ECO:0000269" key="5">
    <source>
    </source>
</evidence>
<evidence type="ECO:0000269" key="6">
    <source>
    </source>
</evidence>
<evidence type="ECO:0000269" key="7">
    <source>
    </source>
</evidence>
<evidence type="ECO:0000269" key="8">
    <source>
    </source>
</evidence>
<evidence type="ECO:0000269" key="9">
    <source>
    </source>
</evidence>
<evidence type="ECO:0000303" key="10">
    <source>
    </source>
</evidence>
<evidence type="ECO:0000303" key="11">
    <source>
    </source>
</evidence>
<evidence type="ECO:0000303" key="12">
    <source>
    </source>
</evidence>
<evidence type="ECO:0000303" key="13">
    <source>
    </source>
</evidence>
<evidence type="ECO:0000303" key="14">
    <source>
    </source>
</evidence>
<evidence type="ECO:0000303" key="15">
    <source>
    </source>
</evidence>
<evidence type="ECO:0000303" key="16">
    <source ref="8"/>
</evidence>
<evidence type="ECO:0000305" key="17"/>
<evidence type="ECO:0000305" key="18">
    <source>
    </source>
</evidence>
<evidence type="ECO:0000305" key="19">
    <source>
    </source>
</evidence>
<evidence type="ECO:0000305" key="20">
    <source>
    </source>
</evidence>
<evidence type="ECO:0000305" key="21">
    <source>
    </source>
</evidence>
<evidence type="ECO:0000305" key="22">
    <source>
    </source>
</evidence>
<evidence type="ECO:0000312" key="23">
    <source>
        <dbReference type="HGNC" id="HGNC:6050"/>
    </source>
</evidence>
<evidence type="ECO:0007744" key="24">
    <source>
    </source>
</evidence>
<evidence type="ECO:0007829" key="25">
    <source>
        <dbReference type="PDB" id="6GIU"/>
    </source>
</evidence>
<comment type="function">
    <text evidence="3 5 8 9">Phosphatase involved in the dephosphorylation of myo-inositol monophosphates to generate myo-inositol (PubMed:17068342, PubMed:8718889, PubMed:9462881). Is also able to dephosphorylate scyllo-inositol-phosphate, myo-inositol 1,4-diphosphate, scyllo-inositol-1,3-diphosphate and scyllo-inositol-1,4-diphosphate (PubMed:17068342). Also dephosphorylates in vitro other sugar-phosphates including D-galactose-1-phosphate, glucose-1-phosphate, glucose-6-phosphate, fructose-1-phosphate, beta-glycerophosphate and 2'-AMP (PubMed:17068342, PubMed:8718889, PubMed:9462881). Responsible for the provision of inositol required for synthesis of phosphatidylinositols and polyphosphoinositides, and involved in maintaining normal brain function (PubMed:26416544, PubMed:8718889). Has been implicated as the pharmacological target for lithium (Li(+)) action in brain, which is used to treat bipolar affective disorder (PubMed:17068342). Is equally active with 1D-myo-inositol 1-phosphate, 1D-myo-inositol 3-phosphate and D-galactose 1-phosphate (PubMed:9462881).</text>
</comment>
<comment type="catalytic activity">
    <reaction evidence="2 3 6 8 9">
        <text>a myo-inositol phosphate + H2O = myo-inositol + phosphate</text>
        <dbReference type="Rhea" id="RHEA:24056"/>
        <dbReference type="ChEBI" id="CHEBI:15377"/>
        <dbReference type="ChEBI" id="CHEBI:17268"/>
        <dbReference type="ChEBI" id="CHEBI:43474"/>
        <dbReference type="ChEBI" id="CHEBI:84139"/>
        <dbReference type="EC" id="3.1.3.25"/>
    </reaction>
    <physiologicalReaction direction="left-to-right" evidence="18 19 20 21 22">
        <dbReference type="Rhea" id="RHEA:24057"/>
    </physiologicalReaction>
</comment>
<comment type="catalytic activity">
    <reaction evidence="3 8 9">
        <text>1D-myo-inositol 1-phosphate + H2O = myo-inositol + phosphate</text>
        <dbReference type="Rhea" id="RHEA:27670"/>
        <dbReference type="ChEBI" id="CHEBI:15377"/>
        <dbReference type="ChEBI" id="CHEBI:17268"/>
        <dbReference type="ChEBI" id="CHEBI:43474"/>
        <dbReference type="ChEBI" id="CHEBI:58433"/>
        <dbReference type="EC" id="3.1.3.25"/>
    </reaction>
    <physiologicalReaction direction="left-to-right" evidence="19 21 22">
        <dbReference type="Rhea" id="RHEA:27671"/>
    </physiologicalReaction>
</comment>
<comment type="catalytic activity">
    <reaction evidence="3">
        <text>1D-myo-inositol 2-phosphate + H2O = myo-inositol + phosphate</text>
        <dbReference type="Rhea" id="RHEA:44152"/>
        <dbReference type="ChEBI" id="CHEBI:15377"/>
        <dbReference type="ChEBI" id="CHEBI:17268"/>
        <dbReference type="ChEBI" id="CHEBI:43474"/>
        <dbReference type="ChEBI" id="CHEBI:84142"/>
        <dbReference type="EC" id="3.1.3.25"/>
    </reaction>
    <physiologicalReaction direction="left-to-right" evidence="19">
        <dbReference type="Rhea" id="RHEA:44153"/>
    </physiologicalReaction>
</comment>
<comment type="catalytic activity">
    <reaction evidence="3 9">
        <text>1D-myo-inositol 3-phosphate + H2O = myo-inositol + phosphate</text>
        <dbReference type="Rhea" id="RHEA:30739"/>
        <dbReference type="ChEBI" id="CHEBI:15377"/>
        <dbReference type="ChEBI" id="CHEBI:17268"/>
        <dbReference type="ChEBI" id="CHEBI:43474"/>
        <dbReference type="ChEBI" id="CHEBI:58401"/>
        <dbReference type="EC" id="3.1.3.25"/>
    </reaction>
    <physiologicalReaction direction="left-to-right" evidence="19 22">
        <dbReference type="Rhea" id="RHEA:30740"/>
    </physiologicalReaction>
</comment>
<comment type="catalytic activity">
    <reaction evidence="3">
        <text>1D-myo-inositol 4-phosphate + H2O = myo-inositol + phosphate</text>
        <dbReference type="Rhea" id="RHEA:30735"/>
        <dbReference type="ChEBI" id="CHEBI:15377"/>
        <dbReference type="ChEBI" id="CHEBI:17268"/>
        <dbReference type="ChEBI" id="CHEBI:43474"/>
        <dbReference type="ChEBI" id="CHEBI:58469"/>
        <dbReference type="EC" id="3.1.3.25"/>
    </reaction>
    <physiologicalReaction direction="left-to-right" evidence="19">
        <dbReference type="Rhea" id="RHEA:30736"/>
    </physiologicalReaction>
</comment>
<comment type="catalytic activity">
    <reaction evidence="3">
        <text>1D-myo-inositol 5-phosphate + H2O = myo-inositol + phosphate</text>
        <dbReference type="Rhea" id="RHEA:44156"/>
        <dbReference type="ChEBI" id="CHEBI:15377"/>
        <dbReference type="ChEBI" id="CHEBI:17268"/>
        <dbReference type="ChEBI" id="CHEBI:43474"/>
        <dbReference type="ChEBI" id="CHEBI:84141"/>
        <dbReference type="EC" id="3.1.3.25"/>
    </reaction>
    <physiologicalReaction direction="left-to-right" evidence="19">
        <dbReference type="Rhea" id="RHEA:44157"/>
    </physiologicalReaction>
</comment>
<comment type="catalytic activity">
    <reaction evidence="3">
        <text>1D-myo-inositol 6-phosphate + H2O = myo-inositol + phosphate</text>
        <dbReference type="Rhea" id="RHEA:44160"/>
        <dbReference type="ChEBI" id="CHEBI:15377"/>
        <dbReference type="ChEBI" id="CHEBI:17268"/>
        <dbReference type="ChEBI" id="CHEBI:43474"/>
        <dbReference type="ChEBI" id="CHEBI:64841"/>
        <dbReference type="EC" id="3.1.3.25"/>
    </reaction>
    <physiologicalReaction direction="left-to-right" evidence="19">
        <dbReference type="Rhea" id="RHEA:44161"/>
    </physiologicalReaction>
</comment>
<comment type="catalytic activity">
    <reaction evidence="3">
        <text>scyllo-inositol 1-phosphate + H2O = scyllo-inositol + phosphate</text>
        <dbReference type="Rhea" id="RHEA:82131"/>
        <dbReference type="ChEBI" id="CHEBI:10642"/>
        <dbReference type="ChEBI" id="CHEBI:15377"/>
        <dbReference type="ChEBI" id="CHEBI:43474"/>
        <dbReference type="ChEBI" id="CHEBI:232087"/>
    </reaction>
    <physiologicalReaction direction="left-to-right" evidence="19">
        <dbReference type="Rhea" id="RHEA:82132"/>
    </physiologicalReaction>
</comment>
<comment type="catalytic activity">
    <reaction evidence="9">
        <text>alpha-D-galactose 1-phosphate + H2O = D-galactose + phosphate</text>
        <dbReference type="Rhea" id="RHEA:29315"/>
        <dbReference type="ChEBI" id="CHEBI:4139"/>
        <dbReference type="ChEBI" id="CHEBI:15377"/>
        <dbReference type="ChEBI" id="CHEBI:43474"/>
        <dbReference type="ChEBI" id="CHEBI:58336"/>
        <dbReference type="EC" id="3.1.3.94"/>
    </reaction>
    <physiologicalReaction direction="left-to-right" evidence="22">
        <dbReference type="Rhea" id="RHEA:29316"/>
    </physiologicalReaction>
</comment>
<comment type="catalytic activity">
    <reaction evidence="3">
        <text>alpha-D-glucose 1-phosphate + H2O = D-glucose + phosphate</text>
        <dbReference type="Rhea" id="RHEA:19933"/>
        <dbReference type="ChEBI" id="CHEBI:4167"/>
        <dbReference type="ChEBI" id="CHEBI:15377"/>
        <dbReference type="ChEBI" id="CHEBI:43474"/>
        <dbReference type="ChEBI" id="CHEBI:58601"/>
    </reaction>
    <physiologicalReaction direction="left-to-right" evidence="19">
        <dbReference type="Rhea" id="RHEA:19934"/>
    </physiologicalReaction>
</comment>
<comment type="catalytic activity">
    <reaction evidence="3 8">
        <text>D-glucose 6-phosphate + H2O = D-glucose + phosphate</text>
        <dbReference type="Rhea" id="RHEA:16689"/>
        <dbReference type="ChEBI" id="CHEBI:4167"/>
        <dbReference type="ChEBI" id="CHEBI:15377"/>
        <dbReference type="ChEBI" id="CHEBI:43474"/>
        <dbReference type="ChEBI" id="CHEBI:61548"/>
    </reaction>
    <physiologicalReaction direction="left-to-right" evidence="19 21">
        <dbReference type="Rhea" id="RHEA:16690"/>
    </physiologicalReaction>
</comment>
<comment type="catalytic activity">
    <reaction evidence="3">
        <text>beta-D-fructose 1-phosphate + H2O = D-fructose + phosphate</text>
        <dbReference type="Rhea" id="RHEA:35603"/>
        <dbReference type="ChEBI" id="CHEBI:15377"/>
        <dbReference type="ChEBI" id="CHEBI:37721"/>
        <dbReference type="ChEBI" id="CHEBI:43474"/>
        <dbReference type="ChEBI" id="CHEBI:138881"/>
    </reaction>
    <physiologicalReaction direction="left-to-right" evidence="19">
        <dbReference type="Rhea" id="RHEA:35604"/>
    </physiologicalReaction>
</comment>
<comment type="catalytic activity">
    <reaction evidence="3">
        <text>glycerol 2-phosphate + H2O = glycerol + phosphate</text>
        <dbReference type="Rhea" id="RHEA:13105"/>
        <dbReference type="ChEBI" id="CHEBI:15377"/>
        <dbReference type="ChEBI" id="CHEBI:17754"/>
        <dbReference type="ChEBI" id="CHEBI:43474"/>
        <dbReference type="ChEBI" id="CHEBI:58083"/>
    </reaction>
    <physiologicalReaction direction="left-to-right" evidence="19">
        <dbReference type="Rhea" id="RHEA:13106"/>
    </physiologicalReaction>
</comment>
<comment type="catalytic activity">
    <reaction evidence="3">
        <text>adenosine 2'-phosphate + H2O = adenosine + phosphate</text>
        <dbReference type="Rhea" id="RHEA:37343"/>
        <dbReference type="ChEBI" id="CHEBI:15377"/>
        <dbReference type="ChEBI" id="CHEBI:16335"/>
        <dbReference type="ChEBI" id="CHEBI:43474"/>
        <dbReference type="ChEBI" id="CHEBI:77740"/>
    </reaction>
    <physiologicalReaction direction="left-to-right" evidence="19">
        <dbReference type="Rhea" id="RHEA:37344"/>
    </physiologicalReaction>
</comment>
<comment type="cofactor">
    <cofactor evidence="3 8 9 12 14">
        <name>Mg(2+)</name>
        <dbReference type="ChEBI" id="CHEBI:18420"/>
    </cofactor>
</comment>
<comment type="activity regulation">
    <text evidence="3 8 9">Activity with myo-inositol monophosphates and D-galactose 1-phosphate is inhibited by Li(+), Ca(2+) and Mn(2+), but also by Mg(2+) at concentrations above 3 mM.</text>
</comment>
<comment type="biophysicochemical properties">
    <kinetics>
        <KM evidence="6">42 uM for D-myo-inositol 1-phosphate</KM>
        <KM evidence="6">62 uM for L-myo-inositol 1-phosphate</KM>
    </kinetics>
    <phDependence>
        <text evidence="3">Optimum pH is 7.0-7.5.</text>
    </phDependence>
</comment>
<comment type="pathway">
    <text>Polyol metabolism; myo-inositol biosynthesis; myo-inositol from D-glucose 6-phosphate: step 2/2.</text>
</comment>
<comment type="subunit">
    <text evidence="1 4 6 7 9">Homodimer.</text>
</comment>
<comment type="interaction">
    <interactant intactId="EBI-752410">
        <id>P29218</id>
    </interactant>
    <interactant intactId="EBI-752410">
        <id>P29218</id>
        <label>IMPA1</label>
    </interactant>
    <organismsDiffer>false</organismsDiffer>
    <experiments>4</experiments>
</comment>
<comment type="interaction">
    <interactant intactId="EBI-752410">
        <id>P29218</id>
    </interactant>
    <interactant intactId="EBI-725233">
        <id>O14732</id>
        <label>IMPA2</label>
    </interactant>
    <organismsDiffer>false</organismsDiffer>
    <experiments>4</experiments>
</comment>
<comment type="interaction">
    <interactant intactId="EBI-12330251">
        <id>P29218-3</id>
    </interactant>
    <interactant intactId="EBI-930964">
        <id>P54253</id>
        <label>ATXN1</label>
    </interactant>
    <organismsDiffer>false</organismsDiffer>
    <experiments>3</experiments>
</comment>
<comment type="interaction">
    <interactant intactId="EBI-12330251">
        <id>P29218-3</id>
    </interactant>
    <interactant intactId="EBI-10976677">
        <id>G5E9A7</id>
        <label>DMWD</label>
    </interactant>
    <organismsDiffer>false</organismsDiffer>
    <experiments>3</experiments>
</comment>
<comment type="interaction">
    <interactant intactId="EBI-12330251">
        <id>P29218-3</id>
    </interactant>
    <interactant intactId="EBI-466029">
        <id>P42858</id>
        <label>HTT</label>
    </interactant>
    <organismsDiffer>false</organismsDiffer>
    <experiments>6</experiments>
</comment>
<comment type="interaction">
    <interactant intactId="EBI-12330251">
        <id>P29218-3</id>
    </interactant>
    <interactant intactId="EBI-12330251">
        <id>P29218-3</id>
        <label>IMPA1</label>
    </interactant>
    <organismsDiffer>false</organismsDiffer>
    <experiments>3</experiments>
</comment>
<comment type="interaction">
    <interactant intactId="EBI-12330251">
        <id>P29218-3</id>
    </interactant>
    <interactant intactId="EBI-725233">
        <id>O14732</id>
        <label>IMPA2</label>
    </interactant>
    <organismsDiffer>false</organismsDiffer>
    <experiments>3</experiments>
</comment>
<comment type="interaction">
    <interactant intactId="EBI-12330251">
        <id>P29218-3</id>
    </interactant>
    <interactant intactId="EBI-5235340">
        <id>Q7Z699</id>
        <label>SPRED1</label>
    </interactant>
    <organismsDiffer>false</organismsDiffer>
    <experiments>3</experiments>
</comment>
<comment type="subcellular location">
    <subcellularLocation>
        <location evidence="3">Cytoplasm</location>
    </subcellularLocation>
</comment>
<comment type="alternative products">
    <event type="alternative splicing"/>
    <isoform>
        <id>P29218-1</id>
        <name>1</name>
        <sequence type="displayed"/>
    </isoform>
    <isoform>
        <id>P29218-2</id>
        <name>2</name>
        <sequence type="described" ref="VSP_042521"/>
    </isoform>
    <isoform>
        <id>P29218-3</id>
        <name>3</name>
        <sequence type="described" ref="VSP_046308"/>
    </isoform>
</comment>
<comment type="disease" evidence="5">
    <disease id="DI-04942">
        <name>Intellectual developmental disorder, autosomal recessive 59</name>
        <acronym>MRT59</acronym>
        <description>A disorder characterized by significantly below average general intellectual functioning associated with impairments in adaptive behavior and manifested during the developmental period.</description>
        <dbReference type="MIM" id="617323"/>
    </disease>
    <text>The disease is caused by variants affecting the gene represented in this entry.</text>
</comment>
<comment type="similarity">
    <text evidence="17">Belongs to the inositol monophosphatase superfamily.</text>
</comment>
<reference key="1">
    <citation type="journal article" date="1992" name="Biochem. J.">
        <title>cDNA cloning of human and rat brain myo-inositol monophosphatase. Expression and characterization of the human recombinant enzyme.</title>
        <authorList>
            <person name="McAllister G."/>
            <person name="Whiting P."/>
            <person name="Hammond E.A."/>
            <person name="Knowles M.R."/>
            <person name="Atack J.R."/>
            <person name="Bailey F.J."/>
            <person name="Maigetter R."/>
            <person name="Ragan C.I."/>
        </authorList>
    </citation>
    <scope>NUCLEOTIDE SEQUENCE [MRNA] (ISOFORM 1)</scope>
    <scope>CATALYTIC ACTIVITY</scope>
    <source>
        <tissue>Hippocampus</tissue>
    </source>
</reference>
<reference key="2">
    <citation type="journal article" date="1997" name="Genomics">
        <title>Genomic structure and chromosomal localization of a human myo-inositol monophosphatase gene (IMPA).</title>
        <authorList>
            <person name="Sjoeholt G."/>
            <person name="Molven A."/>
            <person name="Loevlie R."/>
            <person name="Wilcox A."/>
            <person name="Sikela J.M."/>
            <person name="Steen V.M."/>
        </authorList>
    </citation>
    <scope>NUCLEOTIDE SEQUENCE [GENOMIC DNA]</scope>
</reference>
<reference key="3">
    <citation type="submission" date="1998-01" db="EMBL/GenBank/DDBJ databases">
        <title>Molecular cloning and expression of human cerebral cortex myo-inositol monophosphatase A1 cDNA.</title>
        <authorList>
            <person name="Parthasarathy R."/>
            <person name="Parthasarathy L."/>
            <person name="Vadnal R.E."/>
        </authorList>
    </citation>
    <scope>NUCLEOTIDE SEQUENCE [MRNA] (ISOFORM 1)</scope>
    <source>
        <tissue>Brain</tissue>
    </source>
</reference>
<reference key="4">
    <citation type="journal article" date="2004" name="Nat. Genet.">
        <title>Complete sequencing and characterization of 21,243 full-length human cDNAs.</title>
        <authorList>
            <person name="Ota T."/>
            <person name="Suzuki Y."/>
            <person name="Nishikawa T."/>
            <person name="Otsuki T."/>
            <person name="Sugiyama T."/>
            <person name="Irie R."/>
            <person name="Wakamatsu A."/>
            <person name="Hayashi K."/>
            <person name="Sato H."/>
            <person name="Nagai K."/>
            <person name="Kimura K."/>
            <person name="Makita H."/>
            <person name="Sekine M."/>
            <person name="Obayashi M."/>
            <person name="Nishi T."/>
            <person name="Shibahara T."/>
            <person name="Tanaka T."/>
            <person name="Ishii S."/>
            <person name="Yamamoto J."/>
            <person name="Saito K."/>
            <person name="Kawai Y."/>
            <person name="Isono Y."/>
            <person name="Nakamura Y."/>
            <person name="Nagahari K."/>
            <person name="Murakami K."/>
            <person name="Yasuda T."/>
            <person name="Iwayanagi T."/>
            <person name="Wagatsuma M."/>
            <person name="Shiratori A."/>
            <person name="Sudo H."/>
            <person name="Hosoiri T."/>
            <person name="Kaku Y."/>
            <person name="Kodaira H."/>
            <person name="Kondo H."/>
            <person name="Sugawara M."/>
            <person name="Takahashi M."/>
            <person name="Kanda K."/>
            <person name="Yokoi T."/>
            <person name="Furuya T."/>
            <person name="Kikkawa E."/>
            <person name="Omura Y."/>
            <person name="Abe K."/>
            <person name="Kamihara K."/>
            <person name="Katsuta N."/>
            <person name="Sato K."/>
            <person name="Tanikawa M."/>
            <person name="Yamazaki M."/>
            <person name="Ninomiya K."/>
            <person name="Ishibashi T."/>
            <person name="Yamashita H."/>
            <person name="Murakawa K."/>
            <person name="Fujimori K."/>
            <person name="Tanai H."/>
            <person name="Kimata M."/>
            <person name="Watanabe M."/>
            <person name="Hiraoka S."/>
            <person name="Chiba Y."/>
            <person name="Ishida S."/>
            <person name="Ono Y."/>
            <person name="Takiguchi S."/>
            <person name="Watanabe S."/>
            <person name="Yosida M."/>
            <person name="Hotuta T."/>
            <person name="Kusano J."/>
            <person name="Kanehori K."/>
            <person name="Takahashi-Fujii A."/>
            <person name="Hara H."/>
            <person name="Tanase T.-O."/>
            <person name="Nomura Y."/>
            <person name="Togiya S."/>
            <person name="Komai F."/>
            <person name="Hara R."/>
            <person name="Takeuchi K."/>
            <person name="Arita M."/>
            <person name="Imose N."/>
            <person name="Musashino K."/>
            <person name="Yuuki H."/>
            <person name="Oshima A."/>
            <person name="Sasaki N."/>
            <person name="Aotsuka S."/>
            <person name="Yoshikawa Y."/>
            <person name="Matsunawa H."/>
            <person name="Ichihara T."/>
            <person name="Shiohata N."/>
            <person name="Sano S."/>
            <person name="Moriya S."/>
            <person name="Momiyama H."/>
            <person name="Satoh N."/>
            <person name="Takami S."/>
            <person name="Terashima Y."/>
            <person name="Suzuki O."/>
            <person name="Nakagawa S."/>
            <person name="Senoh A."/>
            <person name="Mizoguchi H."/>
            <person name="Goto Y."/>
            <person name="Shimizu F."/>
            <person name="Wakebe H."/>
            <person name="Hishigaki H."/>
            <person name="Watanabe T."/>
            <person name="Sugiyama A."/>
            <person name="Takemoto M."/>
            <person name="Kawakami B."/>
            <person name="Yamazaki M."/>
            <person name="Watanabe K."/>
            <person name="Kumagai A."/>
            <person name="Itakura S."/>
            <person name="Fukuzumi Y."/>
            <person name="Fujimori Y."/>
            <person name="Komiyama M."/>
            <person name="Tashiro H."/>
            <person name="Tanigami A."/>
            <person name="Fujiwara T."/>
            <person name="Ono T."/>
            <person name="Yamada K."/>
            <person name="Fujii Y."/>
            <person name="Ozaki K."/>
            <person name="Hirao M."/>
            <person name="Ohmori Y."/>
            <person name="Kawabata A."/>
            <person name="Hikiji T."/>
            <person name="Kobatake N."/>
            <person name="Inagaki H."/>
            <person name="Ikema Y."/>
            <person name="Okamoto S."/>
            <person name="Okitani R."/>
            <person name="Kawakami T."/>
            <person name="Noguchi S."/>
            <person name="Itoh T."/>
            <person name="Shigeta K."/>
            <person name="Senba T."/>
            <person name="Matsumura K."/>
            <person name="Nakajima Y."/>
            <person name="Mizuno T."/>
            <person name="Morinaga M."/>
            <person name="Sasaki M."/>
            <person name="Togashi T."/>
            <person name="Oyama M."/>
            <person name="Hata H."/>
            <person name="Watanabe M."/>
            <person name="Komatsu T."/>
            <person name="Mizushima-Sugano J."/>
            <person name="Satoh T."/>
            <person name="Shirai Y."/>
            <person name="Takahashi Y."/>
            <person name="Nakagawa K."/>
            <person name="Okumura K."/>
            <person name="Nagase T."/>
            <person name="Nomura N."/>
            <person name="Kikuchi H."/>
            <person name="Masuho Y."/>
            <person name="Yamashita R."/>
            <person name="Nakai K."/>
            <person name="Yada T."/>
            <person name="Nakamura Y."/>
            <person name="Ohara O."/>
            <person name="Isogai T."/>
            <person name="Sugano S."/>
        </authorList>
    </citation>
    <scope>NUCLEOTIDE SEQUENCE [LARGE SCALE MRNA] (ISOFORMS 1; 2 AND 3)</scope>
    <source>
        <tissue>Thymus</tissue>
        <tissue>Umbilical cord blood</tissue>
    </source>
</reference>
<reference key="5">
    <citation type="journal article" date="2006" name="Nature">
        <title>DNA sequence and analysis of human chromosome 8.</title>
        <authorList>
            <person name="Nusbaum C."/>
            <person name="Mikkelsen T.S."/>
            <person name="Zody M.C."/>
            <person name="Asakawa S."/>
            <person name="Taudien S."/>
            <person name="Garber M."/>
            <person name="Kodira C.D."/>
            <person name="Schueler M.G."/>
            <person name="Shimizu A."/>
            <person name="Whittaker C.A."/>
            <person name="Chang J.L."/>
            <person name="Cuomo C.A."/>
            <person name="Dewar K."/>
            <person name="FitzGerald M.G."/>
            <person name="Yang X."/>
            <person name="Allen N.R."/>
            <person name="Anderson S."/>
            <person name="Asakawa T."/>
            <person name="Blechschmidt K."/>
            <person name="Bloom T."/>
            <person name="Borowsky M.L."/>
            <person name="Butler J."/>
            <person name="Cook A."/>
            <person name="Corum B."/>
            <person name="DeArellano K."/>
            <person name="DeCaprio D."/>
            <person name="Dooley K.T."/>
            <person name="Dorris L. III"/>
            <person name="Engels R."/>
            <person name="Gloeckner G."/>
            <person name="Hafez N."/>
            <person name="Hagopian D.S."/>
            <person name="Hall J.L."/>
            <person name="Ishikawa S.K."/>
            <person name="Jaffe D.B."/>
            <person name="Kamat A."/>
            <person name="Kudoh J."/>
            <person name="Lehmann R."/>
            <person name="Lokitsang T."/>
            <person name="Macdonald P."/>
            <person name="Major J.E."/>
            <person name="Matthews C.D."/>
            <person name="Mauceli E."/>
            <person name="Menzel U."/>
            <person name="Mihalev A.H."/>
            <person name="Minoshima S."/>
            <person name="Murayama Y."/>
            <person name="Naylor J.W."/>
            <person name="Nicol R."/>
            <person name="Nguyen C."/>
            <person name="O'Leary S.B."/>
            <person name="O'Neill K."/>
            <person name="Parker S.C.J."/>
            <person name="Polley A."/>
            <person name="Raymond C.K."/>
            <person name="Reichwald K."/>
            <person name="Rodriguez J."/>
            <person name="Sasaki T."/>
            <person name="Schilhabel M."/>
            <person name="Siddiqui R."/>
            <person name="Smith C.L."/>
            <person name="Sneddon T.P."/>
            <person name="Talamas J.A."/>
            <person name="Tenzin P."/>
            <person name="Topham K."/>
            <person name="Venkataraman V."/>
            <person name="Wen G."/>
            <person name="Yamazaki S."/>
            <person name="Young S.K."/>
            <person name="Zeng Q."/>
            <person name="Zimmer A.R."/>
            <person name="Rosenthal A."/>
            <person name="Birren B.W."/>
            <person name="Platzer M."/>
            <person name="Shimizu N."/>
            <person name="Lander E.S."/>
        </authorList>
    </citation>
    <scope>NUCLEOTIDE SEQUENCE [LARGE SCALE GENOMIC DNA]</scope>
</reference>
<reference key="6">
    <citation type="submission" date="2005-07" db="EMBL/GenBank/DDBJ databases">
        <authorList>
            <person name="Mural R.J."/>
            <person name="Istrail S."/>
            <person name="Sutton G.G."/>
            <person name="Florea L."/>
            <person name="Halpern A.L."/>
            <person name="Mobarry C.M."/>
            <person name="Lippert R."/>
            <person name="Walenz B."/>
            <person name="Shatkay H."/>
            <person name="Dew I."/>
            <person name="Miller J.R."/>
            <person name="Flanigan M.J."/>
            <person name="Edwards N.J."/>
            <person name="Bolanos R."/>
            <person name="Fasulo D."/>
            <person name="Halldorsson B.V."/>
            <person name="Hannenhalli S."/>
            <person name="Turner R."/>
            <person name="Yooseph S."/>
            <person name="Lu F."/>
            <person name="Nusskern D.R."/>
            <person name="Shue B.C."/>
            <person name="Zheng X.H."/>
            <person name="Zhong F."/>
            <person name="Delcher A.L."/>
            <person name="Huson D.H."/>
            <person name="Kravitz S.A."/>
            <person name="Mouchard L."/>
            <person name="Reinert K."/>
            <person name="Remington K.A."/>
            <person name="Clark A.G."/>
            <person name="Waterman M.S."/>
            <person name="Eichler E.E."/>
            <person name="Adams M.D."/>
            <person name="Hunkapiller M.W."/>
            <person name="Myers E.W."/>
            <person name="Venter J.C."/>
        </authorList>
    </citation>
    <scope>NUCLEOTIDE SEQUENCE [LARGE SCALE GENOMIC DNA]</scope>
</reference>
<reference key="7">
    <citation type="journal article" date="2004" name="Genome Res.">
        <title>The status, quality, and expansion of the NIH full-length cDNA project: the Mammalian Gene Collection (MGC).</title>
        <authorList>
            <consortium name="The MGC Project Team"/>
        </authorList>
    </citation>
    <scope>NUCLEOTIDE SEQUENCE [LARGE SCALE MRNA] (ISOFORM 1)</scope>
    <source>
        <tissue>Urinary bladder</tissue>
    </source>
</reference>
<reference key="8">
    <citation type="submission" date="2000-05" db="EMBL/GenBank/DDBJ databases">
        <title>Molecular cloning, genomic organization and promoter analysis of the human brain lithium-sensitive myo-inositol monophosphatase A1 isoenzyme.</title>
        <authorList>
            <person name="Parthasarathy L."/>
            <person name="Parthasarathy R."/>
        </authorList>
    </citation>
    <scope>NUCLEOTIDE SEQUENCE [GENOMIC DNA] OF 1-20</scope>
</reference>
<reference key="9">
    <citation type="journal article" date="1997" name="Brain Res.">
        <title>Brain inositol monophosphatase identified as a galactose 1-phosphatase.</title>
        <authorList>
            <person name="Parthasarathy R."/>
            <person name="Parthasarathy L."/>
            <person name="Vadnal R."/>
        </authorList>
    </citation>
    <scope>FUNCTION</scope>
    <scope>CATALYTIC ACTIVITY</scope>
    <scope>COFACTOR</scope>
    <scope>ACTIVITY REGULATION</scope>
    <scope>SUBUNIT</scope>
</reference>
<reference key="10">
    <citation type="journal article" date="2007" name="J. Biol. Chem.">
        <title>Spatial expression patterns and biochemical properties distinguish a second myo-inositol monophosphatase IMPA2 from IMPA1.</title>
        <authorList>
            <person name="Ohnishi T."/>
            <person name="Ohba H."/>
            <person name="Seo K.-C."/>
            <person name="Im J."/>
            <person name="Sato Y."/>
            <person name="Iwayama Y."/>
            <person name="Furuichi T."/>
            <person name="Chung S.-K."/>
            <person name="Yoshikawa T."/>
        </authorList>
    </citation>
    <scope>FUNCTION</scope>
    <scope>CATALYTIC ACTIVITY</scope>
    <scope>COFACTOR</scope>
    <scope>BIOPHYSICOCHEMICAL PROPERTIES</scope>
    <scope>ACTIVITY REGULATION</scope>
    <scope>SUBCELLULAR LOCATION</scope>
    <scope>MUTAGENESIS OF ASP-93</scope>
</reference>
<reference key="11">
    <citation type="journal article" date="2008" name="Proc. Natl. Acad. Sci. U.S.A.">
        <title>A quantitative atlas of mitotic phosphorylation.</title>
        <authorList>
            <person name="Dephoure N."/>
            <person name="Zhou C."/>
            <person name="Villen J."/>
            <person name="Beausoleil S.A."/>
            <person name="Bakalarski C.E."/>
            <person name="Elledge S.J."/>
            <person name="Gygi S.P."/>
        </authorList>
    </citation>
    <scope>IDENTIFICATION BY MASS SPECTROMETRY [LARGE SCALE ANALYSIS]</scope>
    <source>
        <tissue>Cervix carcinoma</tissue>
    </source>
</reference>
<reference key="12">
    <citation type="journal article" date="2009" name="Sci. Signal.">
        <title>Quantitative phosphoproteomic analysis of T cell receptor signaling reveals system-wide modulation of protein-protein interactions.</title>
        <authorList>
            <person name="Mayya V."/>
            <person name="Lundgren D.H."/>
            <person name="Hwang S.-I."/>
            <person name="Rezaul K."/>
            <person name="Wu L."/>
            <person name="Eng J.K."/>
            <person name="Rodionov V."/>
            <person name="Han D.K."/>
        </authorList>
    </citation>
    <scope>IDENTIFICATION BY MASS SPECTROMETRY [LARGE SCALE ANALYSIS]</scope>
    <source>
        <tissue>Leukemic T-cell</tissue>
    </source>
</reference>
<reference key="13">
    <citation type="journal article" date="2011" name="BMC Syst. Biol.">
        <title>Initial characterization of the human central proteome.</title>
        <authorList>
            <person name="Burkard T.R."/>
            <person name="Planyavsky M."/>
            <person name="Kaupe I."/>
            <person name="Breitwieser F.P."/>
            <person name="Buerckstuemmer T."/>
            <person name="Bennett K.L."/>
            <person name="Superti-Furga G."/>
            <person name="Colinge J."/>
        </authorList>
    </citation>
    <scope>IDENTIFICATION BY MASS SPECTROMETRY [LARGE SCALE ANALYSIS]</scope>
</reference>
<reference key="14">
    <citation type="journal article" date="2013" name="J. Proteome Res.">
        <title>Toward a comprehensive characterization of a human cancer cell phosphoproteome.</title>
        <authorList>
            <person name="Zhou H."/>
            <person name="Di Palma S."/>
            <person name="Preisinger C."/>
            <person name="Peng M."/>
            <person name="Polat A.N."/>
            <person name="Heck A.J."/>
            <person name="Mohammed S."/>
        </authorList>
    </citation>
    <scope>PHOSPHORYLATION [LARGE SCALE ANALYSIS] AT THR-168</scope>
    <scope>IDENTIFICATION BY MASS SPECTROMETRY [LARGE SCALE ANALYSIS]</scope>
    <source>
        <tissue>Erythroleukemia</tissue>
    </source>
</reference>
<reference key="15">
    <citation type="journal article" date="2016" name="Mol. Psychiatry">
        <title>A homozygous loss-of-function mutation in inositol monophosphatase 1 (IMPA1) causes severe intellectual disability.</title>
        <authorList>
            <person name="Figueiredo T."/>
            <person name="Melo U.S."/>
            <person name="Pessoa A.L."/>
            <person name="Nobrega P.R."/>
            <person name="Kitajima J.P."/>
            <person name="Rusch H."/>
            <person name="Vaz F."/>
            <person name="Lucato L.T."/>
            <person name="Zatz M."/>
            <person name="Kok F."/>
            <person name="Santos S."/>
        </authorList>
    </citation>
    <scope>INVOLVEMENT IN MRT59</scope>
    <scope>FUNCTION</scope>
</reference>
<reference key="16">
    <citation type="journal article" date="1992" name="Proc. Natl. Acad. Sci. U.S.A.">
        <title>Structure of inositol monophosphatase, the putative target of lithium therapy.</title>
        <authorList>
            <person name="Bone R."/>
            <person name="Springer J.P."/>
            <person name="Atack J.R."/>
        </authorList>
    </citation>
    <scope>X-RAY CRYSTALLOGRAPHY (2.1 ANGSTROMS) IN COMPLEX WITH GADOLINIUM IONS</scope>
    <scope>METAL-BINDING SITE</scope>
    <scope>SUBUNIT</scope>
    <scope>FUNCTION</scope>
</reference>
<reference key="17">
    <citation type="journal article" date="1994" name="Biochemistry">
        <title>Structural analysis of inositol monophosphatase complexes with substrates.</title>
        <authorList>
            <person name="Bone R."/>
            <person name="Frank L."/>
            <person name="Springer J.P."/>
            <person name="Pollack S.J."/>
            <person name="Osborne S.A."/>
            <person name="Atack J.R."/>
            <person name="Knowles M.R."/>
            <person name="McAllister G."/>
            <person name="Ragan C.I."/>
            <person name="Broughton H.B."/>
        </authorList>
    </citation>
    <scope>X-RAY CRYSTALLOGRAPHY (2.20 ANGSTROMS) IN COMPLEX WITH MYO-INOSITOL 1-PHOSPHATE AND GADOLINIUM ION</scope>
    <scope>CATALYTIC ACTIVITY</scope>
    <scope>BIOPHYSICOCHEMICAL PROPERTIES</scope>
    <scope>SUBUNIT</scope>
    <scope>METAL-BINDING SITE</scope>
    <scope>MUTAGENESIS OF SER-165 AND GLU-213</scope>
</reference>
<reference key="18">
    <citation type="journal article" date="1994" name="Biochemistry">
        <title>Structural studies of metal binding by inositol monophosphatase: evidence for two-metal ion catalysis.</title>
        <authorList>
            <person name="Bone R."/>
            <person name="Frank L."/>
            <person name="Springer J.P."/>
            <person name="Atack J.R."/>
        </authorList>
    </citation>
    <scope>X-RAY CRYSTALLOGRAPHY (2.25 ANGSTROMS) IN COMPLEXES WITH SUBSTRATE ANALOG AND MANGANESE</scope>
    <scope>COFACTOR</scope>
</reference>
<reference key="19">
    <citation type="journal article" date="1996" name="Biochemistry">
        <title>The contribution of lysine-36 to catalysis by human myo-inositol monophosphatase.</title>
        <authorList>
            <person name="Ganzhorn A.J."/>
            <person name="Lepage P."/>
            <person name="Pelton P.D."/>
            <person name="Strasser F."/>
            <person name="Vincendon P."/>
            <person name="Rondeau J.-M."/>
        </authorList>
    </citation>
    <scope>X-RAY CRYSTALLOGRAPHY (2.2 ANGSTROMS) OF MUTANT GLN-36</scope>
    <scope>MUTAGENESIS OF LYS-36</scope>
    <scope>CATALYTIC ACTIVITY</scope>
    <scope>FUNCTION</scope>
    <scope>COFACTOR</scope>
    <scope>ACTIVITY REGULATION</scope>
</reference>
<reference key="20">
    <citation type="journal article" date="1997" name="Protein Eng.">
        <title>Structure of an enzyme-substrate complex and the catalytic mechanism of human brain myo-inositol monophosphatase.</title>
        <authorList>
            <person name="Ganzhorn A.J."/>
            <person name="Rondeau J.-M."/>
        </authorList>
    </citation>
    <scope>X-RAY CRYSTALLOGRAPHY (2.5 ANGSTROMS) IN COMPLEX WITH 1D-MYO-INOSITOL 1-PHOSPHATE AND CALCIUM</scope>
    <scope>METAL-BINDING SITE</scope>
</reference>
<reference key="21">
    <citation type="journal article" date="2012" name="Acta Crystallogr. F">
        <title>Cloning, expression, purification, crystallization and X-ray analysis of inositol monophosphatase from Mus musculus and Homo sapiens.</title>
        <authorList>
            <person name="Singh N."/>
            <person name="Halliday A.C."/>
            <person name="Knight M."/>
            <person name="Lack N.A."/>
            <person name="Lowe E."/>
            <person name="Churchill G.C."/>
        </authorList>
    </citation>
    <scope>X-RAY CRYSTALLOGRAPHY (1.70 ANGSTROMS) IN COMPLEX WITH MAGNESIUM</scope>
    <scope>COFACTOR</scope>
    <scope>SUBUNIT</scope>
</reference>
<protein>
    <recommendedName>
        <fullName>Inositol monophosphatase 1</fullName>
        <shortName>IMP 1</shortName>
        <shortName>IMPase 1</shortName>
        <ecNumber evidence="2 3 6 8 9">3.1.3.25</ecNumber>
    </recommendedName>
    <alternativeName>
        <fullName evidence="15">D-galactose 1-phosphate phosphatase</fullName>
        <ecNumber evidence="9">3.1.3.94</ecNumber>
    </alternativeName>
    <alternativeName>
        <fullName>Inositol-1(or 4)-monophosphatase 1</fullName>
    </alternativeName>
    <alternativeName>
        <fullName evidence="16">Lithium-sensitive myo-inositol monophosphatase A1</fullName>
    </alternativeName>
</protein>
<keyword id="KW-0002">3D-structure</keyword>
<keyword id="KW-0025">Alternative splicing</keyword>
<keyword id="KW-0963">Cytoplasm</keyword>
<keyword id="KW-0378">Hydrolase</keyword>
<keyword id="KW-0991">Intellectual disability</keyword>
<keyword id="KW-0452">Lithium</keyword>
<keyword id="KW-0460">Magnesium</keyword>
<keyword id="KW-0479">Metal-binding</keyword>
<keyword id="KW-0597">Phosphoprotein</keyword>
<keyword id="KW-1267">Proteomics identification</keyword>
<keyword id="KW-1185">Reference proteome</keyword>
<gene>
    <name evidence="23" type="primary">IMPA1</name>
    <name type="synonym">IMPA</name>
</gene>
<proteinExistence type="evidence at protein level"/>
<dbReference type="EC" id="3.1.3.25" evidence="2 3 6 8 9"/>
<dbReference type="EC" id="3.1.3.94" evidence="9"/>
<dbReference type="EMBL" id="X66922">
    <property type="protein sequence ID" value="CAA47359.1"/>
    <property type="molecule type" value="mRNA"/>
</dbReference>
<dbReference type="EMBL" id="Y11360">
    <property type="protein sequence ID" value="CAA72195.1"/>
    <property type="molecule type" value="Genomic_DNA"/>
</dbReference>
<dbReference type="EMBL" id="Y11361">
    <property type="protein sequence ID" value="CAA72195.1"/>
    <property type="status" value="JOINED"/>
    <property type="molecule type" value="Genomic_DNA"/>
</dbReference>
<dbReference type="EMBL" id="Y11362">
    <property type="protein sequence ID" value="CAA72195.1"/>
    <property type="status" value="JOINED"/>
    <property type="molecule type" value="Genomic_DNA"/>
</dbReference>
<dbReference type="EMBL" id="Y11367">
    <property type="protein sequence ID" value="CAA72195.1"/>
    <property type="status" value="JOINED"/>
    <property type="molecule type" value="Genomic_DNA"/>
</dbReference>
<dbReference type="EMBL" id="Y11363">
    <property type="protein sequence ID" value="CAA72195.1"/>
    <property type="status" value="JOINED"/>
    <property type="molecule type" value="Genomic_DNA"/>
</dbReference>
<dbReference type="EMBL" id="Y11364">
    <property type="protein sequence ID" value="CAA72195.1"/>
    <property type="status" value="JOINED"/>
    <property type="molecule type" value="Genomic_DNA"/>
</dbReference>
<dbReference type="EMBL" id="Y11365">
    <property type="protein sequence ID" value="CAA72195.1"/>
    <property type="status" value="JOINED"/>
    <property type="molecule type" value="Genomic_DNA"/>
</dbReference>
<dbReference type="EMBL" id="Y11366">
    <property type="protein sequence ID" value="CAA72195.1"/>
    <property type="status" value="JOINED"/>
    <property type="molecule type" value="Genomic_DNA"/>
</dbReference>
<dbReference type="EMBL" id="AF042729">
    <property type="protein sequence ID" value="AAB97468.1"/>
    <property type="molecule type" value="mRNA"/>
</dbReference>
<dbReference type="EMBL" id="AK297078">
    <property type="protein sequence ID" value="BAG59595.1"/>
    <property type="molecule type" value="mRNA"/>
</dbReference>
<dbReference type="EMBL" id="AK300750">
    <property type="protein sequence ID" value="BAH13340.1"/>
    <property type="molecule type" value="mRNA"/>
</dbReference>
<dbReference type="EMBL" id="AK312823">
    <property type="protein sequence ID" value="BAG35680.1"/>
    <property type="molecule type" value="mRNA"/>
</dbReference>
<dbReference type="EMBL" id="AC090255">
    <property type="status" value="NOT_ANNOTATED_CDS"/>
    <property type="molecule type" value="Genomic_DNA"/>
</dbReference>
<dbReference type="EMBL" id="CH471068">
    <property type="protein sequence ID" value="EAW87095.1"/>
    <property type="molecule type" value="Genomic_DNA"/>
</dbReference>
<dbReference type="EMBL" id="BC008381">
    <property type="protein sequence ID" value="AAH08381.1"/>
    <property type="molecule type" value="mRNA"/>
</dbReference>
<dbReference type="EMBL" id="BC009565">
    <property type="protein sequence ID" value="AAH09565.1"/>
    <property type="molecule type" value="mRNA"/>
</dbReference>
<dbReference type="EMBL" id="AF178754">
    <property type="protein sequence ID" value="AAD52997.1"/>
    <property type="molecule type" value="Genomic_DNA"/>
</dbReference>
<dbReference type="CCDS" id="CCDS47883.1">
    <molecule id="P29218-3"/>
</dbReference>
<dbReference type="CCDS" id="CCDS47884.1">
    <molecule id="P29218-2"/>
</dbReference>
<dbReference type="CCDS" id="CCDS6231.1">
    <molecule id="P29218-1"/>
</dbReference>
<dbReference type="PIR" id="S23130">
    <property type="entry name" value="S23130"/>
</dbReference>
<dbReference type="RefSeq" id="NP_001138350.1">
    <molecule id="P29218-3"/>
    <property type="nucleotide sequence ID" value="NM_001144878.2"/>
</dbReference>
<dbReference type="RefSeq" id="NP_001138351.1">
    <molecule id="P29218-2"/>
    <property type="nucleotide sequence ID" value="NM_001144879.2"/>
</dbReference>
<dbReference type="RefSeq" id="NP_005527.1">
    <molecule id="P29218-1"/>
    <property type="nucleotide sequence ID" value="NM_005536.4"/>
</dbReference>
<dbReference type="PDB" id="1AWB">
    <property type="method" value="X-ray"/>
    <property type="resolution" value="2.50 A"/>
    <property type="chains" value="A/B=2-277"/>
</dbReference>
<dbReference type="PDB" id="1IMA">
    <property type="method" value="X-ray"/>
    <property type="resolution" value="2.30 A"/>
    <property type="chains" value="A/B=1-277"/>
</dbReference>
<dbReference type="PDB" id="1IMB">
    <property type="method" value="X-ray"/>
    <property type="resolution" value="2.20 A"/>
    <property type="chains" value="A/B=1-277"/>
</dbReference>
<dbReference type="PDB" id="1IMC">
    <property type="method" value="X-ray"/>
    <property type="resolution" value="2.60 A"/>
    <property type="chains" value="A/B=1-277"/>
</dbReference>
<dbReference type="PDB" id="1IMD">
    <property type="method" value="X-ray"/>
    <property type="resolution" value="2.60 A"/>
    <property type="chains" value="A/B=1-277"/>
</dbReference>
<dbReference type="PDB" id="1IME">
    <property type="method" value="X-ray"/>
    <property type="resolution" value="2.25 A"/>
    <property type="chains" value="A/B=1-277"/>
</dbReference>
<dbReference type="PDB" id="1IMF">
    <property type="method" value="X-ray"/>
    <property type="resolution" value="2.50 A"/>
    <property type="chains" value="A=1-277"/>
</dbReference>
<dbReference type="PDB" id="2HHM">
    <property type="method" value="X-ray"/>
    <property type="resolution" value="2.10 A"/>
    <property type="chains" value="A/B=2-277"/>
</dbReference>
<dbReference type="PDB" id="4AS4">
    <property type="method" value="X-ray"/>
    <property type="resolution" value="1.70 A"/>
    <property type="chains" value="A/B=1-277"/>
</dbReference>
<dbReference type="PDB" id="6GIU">
    <property type="method" value="X-ray"/>
    <property type="resolution" value="1.39 A"/>
    <property type="chains" value="A/B=1-277"/>
</dbReference>
<dbReference type="PDB" id="6GJ0">
    <property type="method" value="X-ray"/>
    <property type="resolution" value="1.73 A"/>
    <property type="chains" value="A/B=1-277"/>
</dbReference>
<dbReference type="PDB" id="6ZK0">
    <property type="method" value="X-ray"/>
    <property type="resolution" value="1.47 A"/>
    <property type="chains" value="AAA/BBB=1-277"/>
</dbReference>
<dbReference type="PDB" id="7VCE">
    <property type="method" value="X-ray"/>
    <property type="resolution" value="2.60 A"/>
    <property type="chains" value="A/B=3-276"/>
</dbReference>
<dbReference type="PDBsum" id="1AWB"/>
<dbReference type="PDBsum" id="1IMA"/>
<dbReference type="PDBsum" id="1IMB"/>
<dbReference type="PDBsum" id="1IMC"/>
<dbReference type="PDBsum" id="1IMD"/>
<dbReference type="PDBsum" id="1IME"/>
<dbReference type="PDBsum" id="1IMF"/>
<dbReference type="PDBsum" id="2HHM"/>
<dbReference type="PDBsum" id="4AS4"/>
<dbReference type="PDBsum" id="6GIU"/>
<dbReference type="PDBsum" id="6GJ0"/>
<dbReference type="PDBsum" id="6ZK0"/>
<dbReference type="PDBsum" id="7VCE"/>
<dbReference type="SMR" id="P29218"/>
<dbReference type="BioGRID" id="109825">
    <property type="interactions" value="41"/>
</dbReference>
<dbReference type="CORUM" id="P29218"/>
<dbReference type="FunCoup" id="P29218">
    <property type="interactions" value="1295"/>
</dbReference>
<dbReference type="IntAct" id="P29218">
    <property type="interactions" value="10"/>
</dbReference>
<dbReference type="MINT" id="P29218"/>
<dbReference type="STRING" id="9606.ENSP00000408526"/>
<dbReference type="ChEMBL" id="CHEMBL1786"/>
<dbReference type="DrugBank" id="DB03542">
    <property type="generic name" value="L-Myo-Inositol-1-Phosphate"/>
</dbReference>
<dbReference type="DrugBank" id="DB14509">
    <property type="generic name" value="Lithium carbonate"/>
</dbReference>
<dbReference type="DrugBank" id="DB01356">
    <property type="generic name" value="Lithium cation"/>
</dbReference>
<dbReference type="DrugBank" id="DB14507">
    <property type="generic name" value="Lithium citrate"/>
</dbReference>
<dbReference type="DrugBank" id="DB14508">
    <property type="generic name" value="Lithium succinate"/>
</dbReference>
<dbReference type="DrugCentral" id="P29218"/>
<dbReference type="GuidetoPHARMACOLOGY" id="1463"/>
<dbReference type="DEPOD" id="IMPA1"/>
<dbReference type="GlyGen" id="P29218">
    <property type="glycosylation" value="1 site, 1 O-linked glycan (1 site)"/>
</dbReference>
<dbReference type="iPTMnet" id="P29218"/>
<dbReference type="PhosphoSitePlus" id="P29218"/>
<dbReference type="SwissPalm" id="P29218"/>
<dbReference type="BioMuta" id="IMPA1"/>
<dbReference type="DMDM" id="127717"/>
<dbReference type="REPRODUCTION-2DPAGE" id="IPI00020906"/>
<dbReference type="jPOST" id="P29218"/>
<dbReference type="MassIVE" id="P29218"/>
<dbReference type="PaxDb" id="9606-ENSP00000408526"/>
<dbReference type="PeptideAtlas" id="P29218"/>
<dbReference type="ProteomicsDB" id="54529">
    <molecule id="P29218-1"/>
</dbReference>
<dbReference type="ProteomicsDB" id="54530">
    <molecule id="P29218-2"/>
</dbReference>
<dbReference type="Pumba" id="P29218"/>
<dbReference type="Antibodypedia" id="25334">
    <property type="antibodies" value="159 antibodies from 27 providers"/>
</dbReference>
<dbReference type="DNASU" id="3612"/>
<dbReference type="Ensembl" id="ENST00000256108.10">
    <molecule id="P29218-1"/>
    <property type="protein sequence ID" value="ENSP00000256108.5"/>
    <property type="gene ID" value="ENSG00000133731.10"/>
</dbReference>
<dbReference type="Ensembl" id="ENST00000311489.8">
    <molecule id="P29218-2"/>
    <property type="protein sequence ID" value="ENSP00000311803.4"/>
    <property type="gene ID" value="ENSG00000133731.10"/>
</dbReference>
<dbReference type="Ensembl" id="ENST00000449740.6">
    <molecule id="P29218-3"/>
    <property type="protein sequence ID" value="ENSP00000408526.2"/>
    <property type="gene ID" value="ENSG00000133731.10"/>
</dbReference>
<dbReference type="GeneID" id="3612"/>
<dbReference type="KEGG" id="hsa:3612"/>
<dbReference type="MANE-Select" id="ENST00000256108.10">
    <property type="protein sequence ID" value="ENSP00000256108.5"/>
    <property type="RefSeq nucleotide sequence ID" value="NM_005536.4"/>
    <property type="RefSeq protein sequence ID" value="NP_005527.1"/>
</dbReference>
<dbReference type="UCSC" id="uc003ych.3">
    <molecule id="P29218-1"/>
    <property type="organism name" value="human"/>
</dbReference>
<dbReference type="AGR" id="HGNC:6050"/>
<dbReference type="CTD" id="3612"/>
<dbReference type="DisGeNET" id="3612"/>
<dbReference type="GeneCards" id="IMPA1"/>
<dbReference type="HGNC" id="HGNC:6050">
    <property type="gene designation" value="IMPA1"/>
</dbReference>
<dbReference type="HPA" id="ENSG00000133731">
    <property type="expression patterns" value="Low tissue specificity"/>
</dbReference>
<dbReference type="MalaCards" id="IMPA1"/>
<dbReference type="MIM" id="602064">
    <property type="type" value="gene"/>
</dbReference>
<dbReference type="MIM" id="617323">
    <property type="type" value="phenotype"/>
</dbReference>
<dbReference type="neXtProt" id="NX_P29218"/>
<dbReference type="OpenTargets" id="ENSG00000133731"/>
<dbReference type="Orphanet" id="88616">
    <property type="disease" value="Autosomal recessive non-syndromic intellectual disability"/>
</dbReference>
<dbReference type="PharmGKB" id="PA29860"/>
<dbReference type="VEuPathDB" id="HostDB:ENSG00000133731"/>
<dbReference type="eggNOG" id="KOG2951">
    <property type="taxonomic scope" value="Eukaryota"/>
</dbReference>
<dbReference type="GeneTree" id="ENSGT00940000154634"/>
<dbReference type="HOGENOM" id="CLU_044118_1_0_1"/>
<dbReference type="InParanoid" id="P29218"/>
<dbReference type="OMA" id="ERGLHPW"/>
<dbReference type="OrthoDB" id="10254945at2759"/>
<dbReference type="PAN-GO" id="P29218">
    <property type="GO annotations" value="4 GO annotations based on evolutionary models"/>
</dbReference>
<dbReference type="PhylomeDB" id="P29218"/>
<dbReference type="TreeFam" id="TF313194"/>
<dbReference type="BioCyc" id="MetaCyc:HS05783-MONOMER"/>
<dbReference type="BRENDA" id="3.1.3.25">
    <property type="organism ID" value="2681"/>
</dbReference>
<dbReference type="PathwayCommons" id="P29218"/>
<dbReference type="Reactome" id="R-HSA-1855183">
    <property type="pathway name" value="Synthesis of IP2, IP, and Ins in the cytosol"/>
</dbReference>
<dbReference type="SABIO-RK" id="P29218"/>
<dbReference type="SignaLink" id="P29218"/>
<dbReference type="UniPathway" id="UPA00823">
    <property type="reaction ID" value="UER00788"/>
</dbReference>
<dbReference type="BioGRID-ORCS" id="3612">
    <property type="hits" value="17 hits in 1176 CRISPR screens"/>
</dbReference>
<dbReference type="CD-CODE" id="FB4E32DD">
    <property type="entry name" value="Presynaptic clusters and postsynaptic densities"/>
</dbReference>
<dbReference type="ChiTaRS" id="IMPA1">
    <property type="organism name" value="human"/>
</dbReference>
<dbReference type="EvolutionaryTrace" id="P29218"/>
<dbReference type="GeneWiki" id="IMPA1"/>
<dbReference type="GenomeRNAi" id="3612"/>
<dbReference type="Pharos" id="P29218">
    <property type="development level" value="Tclin"/>
</dbReference>
<dbReference type="PRO" id="PR:P29218"/>
<dbReference type="Proteomes" id="UP000005640">
    <property type="component" value="Chromosome 8"/>
</dbReference>
<dbReference type="RNAct" id="P29218">
    <property type="molecule type" value="protein"/>
</dbReference>
<dbReference type="Bgee" id="ENSG00000133731">
    <property type="expression patterns" value="Expressed in secondary oocyte and 209 other cell types or tissues"/>
</dbReference>
<dbReference type="ExpressionAtlas" id="P29218">
    <property type="expression patterns" value="baseline and differential"/>
</dbReference>
<dbReference type="GO" id="GO:0005737">
    <property type="term" value="C:cytoplasm"/>
    <property type="evidence" value="ECO:0000314"/>
    <property type="project" value="UniProtKB"/>
</dbReference>
<dbReference type="GO" id="GO:0005829">
    <property type="term" value="C:cytosol"/>
    <property type="evidence" value="ECO:0000304"/>
    <property type="project" value="Reactome"/>
</dbReference>
<dbReference type="GO" id="GO:0103026">
    <property type="term" value="F:fructose-1-phosphatase activity"/>
    <property type="evidence" value="ECO:0007669"/>
    <property type="project" value="RHEA"/>
</dbReference>
<dbReference type="GO" id="GO:0008877">
    <property type="term" value="F:glucose-1-phosphatase activity"/>
    <property type="evidence" value="ECO:0007669"/>
    <property type="project" value="RHEA"/>
</dbReference>
<dbReference type="GO" id="GO:0004346">
    <property type="term" value="F:glucose-6-phosphatase activity"/>
    <property type="evidence" value="ECO:0007669"/>
    <property type="project" value="RHEA"/>
</dbReference>
<dbReference type="GO" id="GO:0047954">
    <property type="term" value="F:glycerol-2-phosphatase activity"/>
    <property type="evidence" value="ECO:0007669"/>
    <property type="project" value="RHEA"/>
</dbReference>
<dbReference type="GO" id="GO:0042802">
    <property type="term" value="F:identical protein binding"/>
    <property type="evidence" value="ECO:0000353"/>
    <property type="project" value="IntAct"/>
</dbReference>
<dbReference type="GO" id="GO:0008934">
    <property type="term" value="F:inositol monophosphate 1-phosphatase activity"/>
    <property type="evidence" value="ECO:0000314"/>
    <property type="project" value="MGI"/>
</dbReference>
<dbReference type="GO" id="GO:0052832">
    <property type="term" value="F:inositol monophosphate 3-phosphatase activity"/>
    <property type="evidence" value="ECO:0007669"/>
    <property type="project" value="RHEA"/>
</dbReference>
<dbReference type="GO" id="GO:0052833">
    <property type="term" value="F:inositol monophosphate 4-phosphatase activity"/>
    <property type="evidence" value="ECO:0007669"/>
    <property type="project" value="RHEA"/>
</dbReference>
<dbReference type="GO" id="GO:0052834">
    <property type="term" value="F:inositol monophosphate phosphatase activity"/>
    <property type="evidence" value="ECO:0000314"/>
    <property type="project" value="UniProtKB"/>
</dbReference>
<dbReference type="GO" id="GO:0031403">
    <property type="term" value="F:lithium ion binding"/>
    <property type="evidence" value="ECO:0000314"/>
    <property type="project" value="UniProtKB"/>
</dbReference>
<dbReference type="GO" id="GO:0000287">
    <property type="term" value="F:magnesium ion binding"/>
    <property type="evidence" value="ECO:0000314"/>
    <property type="project" value="UniProtKB"/>
</dbReference>
<dbReference type="GO" id="GO:0030145">
    <property type="term" value="F:manganese ion binding"/>
    <property type="evidence" value="ECO:0000314"/>
    <property type="project" value="UniProtKB"/>
</dbReference>
<dbReference type="GO" id="GO:0042803">
    <property type="term" value="F:protein homodimerization activity"/>
    <property type="evidence" value="ECO:0000314"/>
    <property type="project" value="MGI"/>
</dbReference>
<dbReference type="GO" id="GO:0006021">
    <property type="term" value="P:inositol biosynthetic process"/>
    <property type="evidence" value="ECO:0007669"/>
    <property type="project" value="UniProtKB-UniPathway"/>
</dbReference>
<dbReference type="GO" id="GO:0006020">
    <property type="term" value="P:inositol metabolic process"/>
    <property type="evidence" value="ECO:0000318"/>
    <property type="project" value="GO_Central"/>
</dbReference>
<dbReference type="GO" id="GO:0006796">
    <property type="term" value="P:phosphate-containing compound metabolic process"/>
    <property type="evidence" value="ECO:0000315"/>
    <property type="project" value="UniProtKB"/>
</dbReference>
<dbReference type="GO" id="GO:0006661">
    <property type="term" value="P:phosphatidylinositol biosynthetic process"/>
    <property type="evidence" value="ECO:0000315"/>
    <property type="project" value="UniProtKB"/>
</dbReference>
<dbReference type="GO" id="GO:0046854">
    <property type="term" value="P:phosphatidylinositol phosphate biosynthetic process"/>
    <property type="evidence" value="ECO:0007669"/>
    <property type="project" value="InterPro"/>
</dbReference>
<dbReference type="GO" id="GO:0007165">
    <property type="term" value="P:signal transduction"/>
    <property type="evidence" value="ECO:0000315"/>
    <property type="project" value="UniProtKB"/>
</dbReference>
<dbReference type="CDD" id="cd01639">
    <property type="entry name" value="IMPase"/>
    <property type="match status" value="1"/>
</dbReference>
<dbReference type="FunFam" id="3.30.540.10:FF:000004">
    <property type="entry name" value="Inositol-1-monophosphatase"/>
    <property type="match status" value="1"/>
</dbReference>
<dbReference type="FunFam" id="3.40.190.80:FF:000002">
    <property type="entry name" value="Inositol-1-monophosphatase"/>
    <property type="match status" value="1"/>
</dbReference>
<dbReference type="Gene3D" id="3.40.190.80">
    <property type="match status" value="1"/>
</dbReference>
<dbReference type="Gene3D" id="3.30.540.10">
    <property type="entry name" value="Fructose-1,6-Bisphosphatase, subunit A, domain 1"/>
    <property type="match status" value="1"/>
</dbReference>
<dbReference type="InterPro" id="IPR033942">
    <property type="entry name" value="IMPase"/>
</dbReference>
<dbReference type="InterPro" id="IPR020583">
    <property type="entry name" value="Inositol_monoP_metal-BS"/>
</dbReference>
<dbReference type="InterPro" id="IPR020552">
    <property type="entry name" value="Inositol_monoPase_Li-sen"/>
</dbReference>
<dbReference type="InterPro" id="IPR000760">
    <property type="entry name" value="Inositol_monophosphatase-like"/>
</dbReference>
<dbReference type="InterPro" id="IPR020550">
    <property type="entry name" value="Inositol_monophosphatase_CS"/>
</dbReference>
<dbReference type="PANTHER" id="PTHR20854">
    <property type="entry name" value="INOSITOL MONOPHOSPHATASE"/>
    <property type="match status" value="1"/>
</dbReference>
<dbReference type="PANTHER" id="PTHR20854:SF26">
    <property type="entry name" value="INOSITOL MONOPHOSPHATASE 1"/>
    <property type="match status" value="1"/>
</dbReference>
<dbReference type="Pfam" id="PF00459">
    <property type="entry name" value="Inositol_P"/>
    <property type="match status" value="1"/>
</dbReference>
<dbReference type="PRINTS" id="PR00377">
    <property type="entry name" value="IMPHPHTASES"/>
</dbReference>
<dbReference type="PRINTS" id="PR00378">
    <property type="entry name" value="LIIMPHPHTASE"/>
</dbReference>
<dbReference type="SUPFAM" id="SSF56655">
    <property type="entry name" value="Carbohydrate phosphatase"/>
    <property type="match status" value="1"/>
</dbReference>
<dbReference type="PROSITE" id="PS00629">
    <property type="entry name" value="IMP_1"/>
    <property type="match status" value="1"/>
</dbReference>
<dbReference type="PROSITE" id="PS00630">
    <property type="entry name" value="IMP_2"/>
    <property type="match status" value="1"/>
</dbReference>
<organism>
    <name type="scientific">Homo sapiens</name>
    <name type="common">Human</name>
    <dbReference type="NCBI Taxonomy" id="9606"/>
    <lineage>
        <taxon>Eukaryota</taxon>
        <taxon>Metazoa</taxon>
        <taxon>Chordata</taxon>
        <taxon>Craniata</taxon>
        <taxon>Vertebrata</taxon>
        <taxon>Euteleostomi</taxon>
        <taxon>Mammalia</taxon>
        <taxon>Eutheria</taxon>
        <taxon>Euarchontoglires</taxon>
        <taxon>Primates</taxon>
        <taxon>Haplorrhini</taxon>
        <taxon>Catarrhini</taxon>
        <taxon>Hominidae</taxon>
        <taxon>Homo</taxon>
    </lineage>
</organism>
<sequence>MADPWQECMDYAVTLARQAGEVVCEAIKNEMNVMLKSSPVDLVTATDQKVEKMLISSIKEKYPSHSFIGEESVAAGEKSILTDNPTWIIDPIDGTTNFVHRFPFVAVSIGFAVNKKIEFGVVYSCVEGKMYTARKGKGAFCNGQKLQVSQQEDITKSLLVTELGSSRTPETVRMVLSNMEKLFCIPVHGIRSVGTAAVNMCLVATGGADAYYEMGIHCWDVAGAGIIVTEAGGVLMDVTGGPFDLMSRRVIAANNRILAERIAKEIQVIPLQRDDED</sequence>